<proteinExistence type="evidence at transcript level"/>
<evidence type="ECO:0000250" key="1">
    <source>
        <dbReference type="UniProtKB" id="Q9LVA9"/>
    </source>
</evidence>
<evidence type="ECO:0000255" key="2"/>
<evidence type="ECO:0000256" key="3">
    <source>
        <dbReference type="SAM" id="MobiDB-lite"/>
    </source>
</evidence>
<evidence type="ECO:0000269" key="4">
    <source>
    </source>
</evidence>
<evidence type="ECO:0000269" key="5">
    <source>
    </source>
</evidence>
<evidence type="ECO:0000303" key="6">
    <source>
    </source>
</evidence>
<evidence type="ECO:0000312" key="7">
    <source>
        <dbReference type="EMBL" id="BAB86424.1"/>
    </source>
</evidence>
<evidence type="ECO:0000312" key="8">
    <source>
        <dbReference type="EMBL" id="BAS74802.1"/>
    </source>
</evidence>
<evidence type="ECO:0000312" key="9">
    <source>
        <dbReference type="EMBL" id="EAZ13856.1"/>
    </source>
</evidence>
<reference key="1">
    <citation type="journal article" date="2002" name="Nature">
        <title>The genome sequence and structure of rice chromosome 1.</title>
        <authorList>
            <person name="Sasaki T."/>
            <person name="Matsumoto T."/>
            <person name="Yamamoto K."/>
            <person name="Sakata K."/>
            <person name="Baba T."/>
            <person name="Katayose Y."/>
            <person name="Wu J."/>
            <person name="Niimura Y."/>
            <person name="Cheng Z."/>
            <person name="Nagamura Y."/>
            <person name="Antonio B.A."/>
            <person name="Kanamori H."/>
            <person name="Hosokawa S."/>
            <person name="Masukawa M."/>
            <person name="Arikawa K."/>
            <person name="Chiden Y."/>
            <person name="Hayashi M."/>
            <person name="Okamoto M."/>
            <person name="Ando T."/>
            <person name="Aoki H."/>
            <person name="Arita K."/>
            <person name="Hamada M."/>
            <person name="Harada C."/>
            <person name="Hijishita S."/>
            <person name="Honda M."/>
            <person name="Ichikawa Y."/>
            <person name="Idonuma A."/>
            <person name="Iijima M."/>
            <person name="Ikeda M."/>
            <person name="Ikeno M."/>
            <person name="Ito S."/>
            <person name="Ito T."/>
            <person name="Ito Y."/>
            <person name="Ito Y."/>
            <person name="Iwabuchi A."/>
            <person name="Kamiya K."/>
            <person name="Karasawa W."/>
            <person name="Katagiri S."/>
            <person name="Kikuta A."/>
            <person name="Kobayashi N."/>
            <person name="Kono I."/>
            <person name="Machita K."/>
            <person name="Maehara T."/>
            <person name="Mizuno H."/>
            <person name="Mizubayashi T."/>
            <person name="Mukai Y."/>
            <person name="Nagasaki H."/>
            <person name="Nakashima M."/>
            <person name="Nakama Y."/>
            <person name="Nakamichi Y."/>
            <person name="Nakamura M."/>
            <person name="Namiki N."/>
            <person name="Negishi M."/>
            <person name="Ohta I."/>
            <person name="Ono N."/>
            <person name="Saji S."/>
            <person name="Sakai K."/>
            <person name="Shibata M."/>
            <person name="Shimokawa T."/>
            <person name="Shomura A."/>
            <person name="Song J."/>
            <person name="Takazaki Y."/>
            <person name="Terasawa K."/>
            <person name="Tsuji K."/>
            <person name="Waki K."/>
            <person name="Yamagata H."/>
            <person name="Yamane H."/>
            <person name="Yoshiki S."/>
            <person name="Yoshihara R."/>
            <person name="Yukawa K."/>
            <person name="Zhong H."/>
            <person name="Iwama H."/>
            <person name="Endo T."/>
            <person name="Ito H."/>
            <person name="Hahn J.H."/>
            <person name="Kim H.-I."/>
            <person name="Eun M.-Y."/>
            <person name="Yano M."/>
            <person name="Jiang J."/>
            <person name="Gojobori T."/>
        </authorList>
    </citation>
    <scope>NUCLEOTIDE SEQUENCE [LARGE SCALE GENOMIC DNA]</scope>
    <source>
        <strain>cv. Nipponbare</strain>
    </source>
</reference>
<reference key="2">
    <citation type="journal article" date="2005" name="Nature">
        <title>The map-based sequence of the rice genome.</title>
        <authorList>
            <consortium name="International rice genome sequencing project (IRGSP)"/>
        </authorList>
    </citation>
    <scope>NUCLEOTIDE SEQUENCE [LARGE SCALE GENOMIC DNA]</scope>
    <source>
        <strain>cv. Nipponbare</strain>
    </source>
</reference>
<reference key="3">
    <citation type="journal article" date="2008" name="Nucleic Acids Res.">
        <title>The rice annotation project database (RAP-DB): 2008 update.</title>
        <authorList>
            <consortium name="The rice annotation project (RAP)"/>
        </authorList>
    </citation>
    <scope>GENOME REANNOTATION</scope>
    <source>
        <strain>cv. Nipponbare</strain>
    </source>
</reference>
<reference key="4">
    <citation type="journal article" date="2013" name="Rice">
        <title>Improvement of the Oryza sativa Nipponbare reference genome using next generation sequence and optical map data.</title>
        <authorList>
            <person name="Kawahara Y."/>
            <person name="de la Bastide M."/>
            <person name="Hamilton J.P."/>
            <person name="Kanamori H."/>
            <person name="McCombie W.R."/>
            <person name="Ouyang S."/>
            <person name="Schwartz D.C."/>
            <person name="Tanaka T."/>
            <person name="Wu J."/>
            <person name="Zhou S."/>
            <person name="Childs K.L."/>
            <person name="Davidson R.M."/>
            <person name="Lin H."/>
            <person name="Quesada-Ocampo L."/>
            <person name="Vaillancourt B."/>
            <person name="Sakai H."/>
            <person name="Lee S.S."/>
            <person name="Kim J."/>
            <person name="Numa H."/>
            <person name="Itoh T."/>
            <person name="Buell C.R."/>
            <person name="Matsumoto T."/>
        </authorList>
    </citation>
    <scope>GENOME REANNOTATION</scope>
    <source>
        <strain>cv. Nipponbare</strain>
    </source>
</reference>
<reference key="5">
    <citation type="journal article" date="2005" name="PLoS Biol.">
        <title>The genomes of Oryza sativa: a history of duplications.</title>
        <authorList>
            <person name="Yu J."/>
            <person name="Wang J."/>
            <person name="Lin W."/>
            <person name="Li S."/>
            <person name="Li H."/>
            <person name="Zhou J."/>
            <person name="Ni P."/>
            <person name="Dong W."/>
            <person name="Hu S."/>
            <person name="Zeng C."/>
            <person name="Zhang J."/>
            <person name="Zhang Y."/>
            <person name="Li R."/>
            <person name="Xu Z."/>
            <person name="Li S."/>
            <person name="Li X."/>
            <person name="Zheng H."/>
            <person name="Cong L."/>
            <person name="Lin L."/>
            <person name="Yin J."/>
            <person name="Geng J."/>
            <person name="Li G."/>
            <person name="Shi J."/>
            <person name="Liu J."/>
            <person name="Lv H."/>
            <person name="Li J."/>
            <person name="Wang J."/>
            <person name="Deng Y."/>
            <person name="Ran L."/>
            <person name="Shi X."/>
            <person name="Wang X."/>
            <person name="Wu Q."/>
            <person name="Li C."/>
            <person name="Ren X."/>
            <person name="Wang J."/>
            <person name="Wang X."/>
            <person name="Li D."/>
            <person name="Liu D."/>
            <person name="Zhang X."/>
            <person name="Ji Z."/>
            <person name="Zhao W."/>
            <person name="Sun Y."/>
            <person name="Zhang Z."/>
            <person name="Bao J."/>
            <person name="Han Y."/>
            <person name="Dong L."/>
            <person name="Ji J."/>
            <person name="Chen P."/>
            <person name="Wu S."/>
            <person name="Liu J."/>
            <person name="Xiao Y."/>
            <person name="Bu D."/>
            <person name="Tan J."/>
            <person name="Yang L."/>
            <person name="Ye C."/>
            <person name="Zhang J."/>
            <person name="Xu J."/>
            <person name="Zhou Y."/>
            <person name="Yu Y."/>
            <person name="Zhang B."/>
            <person name="Zhuang S."/>
            <person name="Wei H."/>
            <person name="Liu B."/>
            <person name="Lei M."/>
            <person name="Yu H."/>
            <person name="Li Y."/>
            <person name="Xu H."/>
            <person name="Wei S."/>
            <person name="He X."/>
            <person name="Fang L."/>
            <person name="Zhang Z."/>
            <person name="Zhang Y."/>
            <person name="Huang X."/>
            <person name="Su Z."/>
            <person name="Tong W."/>
            <person name="Li J."/>
            <person name="Tong Z."/>
            <person name="Li S."/>
            <person name="Ye J."/>
            <person name="Wang L."/>
            <person name="Fang L."/>
            <person name="Lei T."/>
            <person name="Chen C.-S."/>
            <person name="Chen H.-C."/>
            <person name="Xu Z."/>
            <person name="Li H."/>
            <person name="Huang H."/>
            <person name="Zhang F."/>
            <person name="Xu H."/>
            <person name="Li N."/>
            <person name="Zhao C."/>
            <person name="Li S."/>
            <person name="Dong L."/>
            <person name="Huang Y."/>
            <person name="Li L."/>
            <person name="Xi Y."/>
            <person name="Qi Q."/>
            <person name="Li W."/>
            <person name="Zhang B."/>
            <person name="Hu W."/>
            <person name="Zhang Y."/>
            <person name="Tian X."/>
            <person name="Jiao Y."/>
            <person name="Liang X."/>
            <person name="Jin J."/>
            <person name="Gao L."/>
            <person name="Zheng W."/>
            <person name="Hao B."/>
            <person name="Liu S.-M."/>
            <person name="Wang W."/>
            <person name="Yuan L."/>
            <person name="Cao M."/>
            <person name="McDermott J."/>
            <person name="Samudrala R."/>
            <person name="Wang J."/>
            <person name="Wong G.K.-S."/>
            <person name="Yang H."/>
        </authorList>
    </citation>
    <scope>NUCLEOTIDE SEQUENCE [LARGE SCALE GENOMIC DNA]</scope>
    <source>
        <strain>cv. Nipponbare</strain>
    </source>
</reference>
<reference key="6">
    <citation type="journal article" date="2003" name="Science">
        <title>Collection, mapping, and annotation of over 28,000 cDNA clones from japonica rice.</title>
        <authorList>
            <consortium name="The rice full-length cDNA consortium"/>
        </authorList>
    </citation>
    <scope>NUCLEOTIDE SEQUENCE [LARGE SCALE MRNA]</scope>
    <source>
        <strain>cv. Nipponbare</strain>
    </source>
</reference>
<reference key="7">
    <citation type="journal article" date="2017" name="New Phytol.">
        <title>OsGCD1 is essential for rice fertility and required for embryo dorsal-ventral pattern formation and endosperm development.</title>
        <authorList>
            <person name="Huang X."/>
            <person name="Peng X."/>
            <person name="Sun M.-X."/>
        </authorList>
    </citation>
    <scope>FUNCTION</scope>
    <scope>DISRUPTION PHENOTYPE</scope>
    <scope>SUBCELLULAR LOCATION</scope>
    <scope>TISSUE SPECIFICITY</scope>
    <scope>DEVELOPMENTAL STAGE</scope>
    <source>
        <strain>cv. Zhonghua 11</strain>
    </source>
</reference>
<reference key="8">
    <citation type="journal article" date="2018" name="New Phytol.">
        <title>The stereotyped positioning of the generative cell associated with vacuole dynamics is not required for male gametogenesis in rice pollen.</title>
        <authorList>
            <person name="Huang X."/>
            <person name="Peng X."/>
            <person name="Xie F."/>
            <person name="Mao W."/>
            <person name="Chen H."/>
            <person name="Sun M.-X."/>
        </authorList>
    </citation>
    <scope>FUNCTION</scope>
    <scope>DISRUPTION PHENOTYPE</scope>
    <source>
        <strain>cv. Zhonghua 11</strain>
    </source>
</reference>
<sequence>MLALRKTLLHGRLPAAPPAAAAAAIASRIPALLRRLSSSPGDGQGGDEWGSSWSTGITKEHFDGSDAAVGRPVTSPSKPVSPELAAVRAMDEEDEIFRAMERDNREAKAYVDSWGDRMRETCELLKQVREPGSRGSYLKDSEKQEMYRLHKEDPETYTVERLAKDFRVMRQRVHAILWLKEMEEEEERKLGKPLDDSVEVLLDSCPEFFNSHDREFHVASLPYKPDFKVMPEGWDGTTRDPDEVLYEISMKEDQMLYEEFVQRLQFNKKKVAGEVKCHKYSRRRPDDGWTYMVEKLGAQSKRGSGGGWKFASLPDGSSRPLNDMEKMYVKRETPKRRRRIMAPFK</sequence>
<keyword id="KW-0217">Developmental protein</keyword>
<keyword id="KW-0496">Mitochondrion</keyword>
<keyword id="KW-1185">Reference proteome</keyword>
<keyword id="KW-0809">Transit peptide</keyword>
<dbReference type="EMBL" id="AP003221">
    <property type="protein sequence ID" value="BAB86424.1"/>
    <property type="molecule type" value="Genomic_DNA"/>
</dbReference>
<dbReference type="EMBL" id="AP008207">
    <property type="protein sequence ID" value="BAF06456.1"/>
    <property type="molecule type" value="Genomic_DNA"/>
</dbReference>
<dbReference type="EMBL" id="AP014957">
    <property type="protein sequence ID" value="BAS74802.1"/>
    <property type="molecule type" value="Genomic_DNA"/>
</dbReference>
<dbReference type="EMBL" id="CM000138">
    <property type="protein sequence ID" value="EAZ13856.1"/>
    <property type="molecule type" value="Genomic_DNA"/>
</dbReference>
<dbReference type="EMBL" id="AK073813">
    <property type="protein sequence ID" value="BAG93652.1"/>
    <property type="molecule type" value="mRNA"/>
</dbReference>
<dbReference type="RefSeq" id="XP_015618015.1">
    <property type="nucleotide sequence ID" value="XM_015762529.1"/>
</dbReference>
<dbReference type="SMR" id="Q8S2G4"/>
<dbReference type="FunCoup" id="Q8S2G4">
    <property type="interactions" value="1851"/>
</dbReference>
<dbReference type="STRING" id="39947.Q8S2G4"/>
<dbReference type="PaxDb" id="39947-Q8S2G4"/>
<dbReference type="EnsemblPlants" id="Os01t0801700-01">
    <property type="protein sequence ID" value="Os01t0801700-01"/>
    <property type="gene ID" value="Os01g0801700"/>
</dbReference>
<dbReference type="Gramene" id="Os01t0801700-01">
    <property type="protein sequence ID" value="Os01t0801700-01"/>
    <property type="gene ID" value="Os01g0801700"/>
</dbReference>
<dbReference type="KEGG" id="dosa:Os01g0801700"/>
<dbReference type="KEGG" id="osa:4327965"/>
<dbReference type="eggNOG" id="ENOG502QPTE">
    <property type="taxonomic scope" value="Eukaryota"/>
</dbReference>
<dbReference type="HOGENOM" id="CLU_058322_0_0_1"/>
<dbReference type="InParanoid" id="Q8S2G4"/>
<dbReference type="OMA" id="DACPEFF"/>
<dbReference type="OrthoDB" id="1919613at2759"/>
<dbReference type="Proteomes" id="UP000000763">
    <property type="component" value="Chromosome 1"/>
</dbReference>
<dbReference type="Proteomes" id="UP000007752">
    <property type="component" value="Chromosome 1"/>
</dbReference>
<dbReference type="Proteomes" id="UP000059680">
    <property type="component" value="Chromosome 1"/>
</dbReference>
<dbReference type="GO" id="GO:0005739">
    <property type="term" value="C:mitochondrion"/>
    <property type="evidence" value="ECO:0000314"/>
    <property type="project" value="UniProtKB"/>
</dbReference>
<dbReference type="GO" id="GO:0007154">
    <property type="term" value="P:cell communication"/>
    <property type="evidence" value="ECO:0007669"/>
    <property type="project" value="EnsemblPlants"/>
</dbReference>
<dbReference type="GO" id="GO:0009793">
    <property type="term" value="P:embryo development ending in seed dormancy"/>
    <property type="evidence" value="ECO:0000315"/>
    <property type="project" value="UniProtKB"/>
</dbReference>
<dbReference type="GO" id="GO:0010342">
    <property type="term" value="P:endosperm cellularization"/>
    <property type="evidence" value="ECO:0000315"/>
    <property type="project" value="UniProtKB"/>
</dbReference>
<dbReference type="GO" id="GO:0009960">
    <property type="term" value="P:endosperm development"/>
    <property type="evidence" value="ECO:0000315"/>
    <property type="project" value="UniProtKB"/>
</dbReference>
<dbReference type="GO" id="GO:0048229">
    <property type="term" value="P:gametophyte development"/>
    <property type="evidence" value="ECO:0000315"/>
    <property type="project" value="UniProtKB"/>
</dbReference>
<dbReference type="GO" id="GO:0007006">
    <property type="term" value="P:mitochondrial membrane organization"/>
    <property type="evidence" value="ECO:0007669"/>
    <property type="project" value="EnsemblPlants"/>
</dbReference>
<dbReference type="GO" id="GO:0051647">
    <property type="term" value="P:nucleus localization"/>
    <property type="evidence" value="ECO:0000315"/>
    <property type="project" value="UniProtKB"/>
</dbReference>
<dbReference type="GO" id="GO:0009555">
    <property type="term" value="P:pollen development"/>
    <property type="evidence" value="ECO:0000315"/>
    <property type="project" value="UniProtKB"/>
</dbReference>
<dbReference type="GO" id="GO:0009846">
    <property type="term" value="P:pollen germination"/>
    <property type="evidence" value="ECO:0000315"/>
    <property type="project" value="UniProtKB"/>
</dbReference>
<dbReference type="GO" id="GO:0048868">
    <property type="term" value="P:pollen tube development"/>
    <property type="evidence" value="ECO:0007669"/>
    <property type="project" value="EnsemblPlants"/>
</dbReference>
<dbReference type="GO" id="GO:0010468">
    <property type="term" value="P:regulation of gene expression"/>
    <property type="evidence" value="ECO:0000315"/>
    <property type="project" value="UniProtKB"/>
</dbReference>
<dbReference type="GO" id="GO:0043067">
    <property type="term" value="P:regulation of programmed cell death"/>
    <property type="evidence" value="ECO:0000315"/>
    <property type="project" value="UniProtKB"/>
</dbReference>
<dbReference type="GO" id="GO:0010581">
    <property type="term" value="P:regulation of starch biosynthetic process"/>
    <property type="evidence" value="ECO:0000315"/>
    <property type="project" value="UniProtKB"/>
</dbReference>
<dbReference type="GO" id="GO:0007033">
    <property type="term" value="P:vacuole organization"/>
    <property type="evidence" value="ECO:0000315"/>
    <property type="project" value="UniProtKB"/>
</dbReference>
<dbReference type="InterPro" id="IPR052851">
    <property type="entry name" value="GCD1_mitochondrial"/>
</dbReference>
<dbReference type="PANTHER" id="PTHR35476">
    <property type="entry name" value="MUCIN-LIKE PROTEIN"/>
    <property type="match status" value="1"/>
</dbReference>
<dbReference type="PANTHER" id="PTHR35476:SF3">
    <property type="entry name" value="SMALL RIBOSOMAL SUBUNIT PROTEIN MS75"/>
    <property type="match status" value="1"/>
</dbReference>
<dbReference type="Pfam" id="PF12824">
    <property type="entry name" value="MRP-L20"/>
    <property type="match status" value="1"/>
</dbReference>
<organism>
    <name type="scientific">Oryza sativa subsp. japonica</name>
    <name type="common">Rice</name>
    <dbReference type="NCBI Taxonomy" id="39947"/>
    <lineage>
        <taxon>Eukaryota</taxon>
        <taxon>Viridiplantae</taxon>
        <taxon>Streptophyta</taxon>
        <taxon>Embryophyta</taxon>
        <taxon>Tracheophyta</taxon>
        <taxon>Spermatophyta</taxon>
        <taxon>Magnoliopsida</taxon>
        <taxon>Liliopsida</taxon>
        <taxon>Poales</taxon>
        <taxon>Poaceae</taxon>
        <taxon>BOP clade</taxon>
        <taxon>Oryzoideae</taxon>
        <taxon>Oryzeae</taxon>
        <taxon>Oryzinae</taxon>
        <taxon>Oryza</taxon>
        <taxon>Oryza sativa</taxon>
    </lineage>
</organism>
<accession>Q8S2G4</accession>
<accession>A0A0P0V9A9</accession>
<gene>
    <name evidence="6" type="primary">GCD1</name>
    <name evidence="8" type="ordered locus">Os01g0801700</name>
    <name type="ordered locus">LOC_Os01g58750</name>
    <name evidence="9" type="ORF">OsJ_03779</name>
    <name evidence="8" type="ORF">OSNPB_010801700</name>
    <name evidence="7" type="ORF">P0003D09.24</name>
</gene>
<comment type="function">
    <text evidence="1 4 5">Essential for fertility (male and female gametophyte functions and development) (PubMed:28585692, PubMed:29424430). Required for the integrity of female gametic mitochondria (By similarity). Involved in embryo apical-basal patterning, and particularly dorsal-ventral patterning, during early embryogenesis, and endosperm free nucleus positioning and development as well as early endosperm development, probably by modulating the expression pattern of related genes (e.g. AL1, MYB3/AL2, CYP78A13/GE, PNH1, HAZ1, MPK6 and OSH1) (PubMed:28585692). Has function in triggering of endosperm programmed cell death (PCD) leading to syncytial endosperm cellularization and starchy endosperm cell maturation (PubMed:28585692). Implicated in central vacuole dynamics necessary for microspore development leading to pollen production, and for pollen development and germination (PubMed:28585692, PubMed:29424430).</text>
</comment>
<comment type="subcellular location">
    <subcellularLocation>
        <location evidence="4">Mitochondrion</location>
    </subcellularLocation>
</comment>
<comment type="tissue specificity">
    <text evidence="4">Expressed in roots, stems, leaves and florets.</text>
</comment>
<comment type="developmental stage">
    <text evidence="4">In florets, detected in glumes, lemmas, paleas and anthers (PubMed:28585692). Also present in ovaries at various developmental stages (PubMed:28585692). Expressed in the mature embryo sac, which comprises four cell types: egg cell, central cell, synergids, and antipodal cells (PubMed:28585692). Observed throughout early embryogenesis and in the endosperm at both the free-nuclear and cellular endosperm stages (PubMed:28585692). In endosperm, confined progressively to aleurone layer (PubMed:28585692). Expressed in anther tapetum and microspores, as well as in the stigma of mature pistils (PubMed:28585692). In 12 days old seedling roots, detected mainly in the cortex and epidermis of the maturation zone, as well as in root hairs (PubMed:28585692). In stems, concentrated in the pith tissue in the middle of the stem (PubMed:28585692). In leaves, confined to mesophyll tissue (PubMed:28585692).</text>
</comment>
<comment type="disruption phenotype">
    <text evidence="4 5">Normal vegetative and floral organ development, but several defects in reproductive organs such as reduced pollen production due to abnormal microspore development, aborted seeds, reduced endosperm nuclei divisions, abnormal distribution of free nuclei missing an oriented positioning at the micropylar end of embryo sacs, and interrupted aleurone differentiation associated with unusual positional endosperm cell differentiation (PubMed:28585692). Disturbed embryos develop slowly, and they exhibit altered pattern formation, particularly the dorsal-ventral pattern and symmetry establishment, thus showing various morphological and structural dysplasias; these phenotypes are associated with missexpression pattern of related genes including derepression of CYP78A13/GE in the scutellar epithelium in an irregular and diffuse pattern, enhanced accumulation of MYB3/AL2, abnormal distribution of AL1 in both endosperm dorsal and ventral sites in the aleurone layer, but reduced levels of OSH1 in embryo indeterminate cells around the presumptive shoot apical meristem (SAM), decreased HAZ1 expression in the outermost cells during early embryogenesis, less MPK6 accumulation and lower levels of PNH1 in the L3 protoderm layer (PubMed:28585692). Impaired triggering of endosperm programmed cell death (PCD) (PubMed:28585692). Altered the central vacuole dynamics leading to disturbed pollen maturation and germination, thus ending in male sterility (PubMed:28585692, PubMed:29424430).</text>
</comment>
<protein>
    <recommendedName>
        <fullName evidence="6">Protein GAMETE CELL DEFECTIVE 1, mitochondrial</fullName>
        <shortName evidence="6">OsGCD1</shortName>
    </recommendedName>
</protein>
<feature type="transit peptide" description="Mitochondrion" evidence="2">
    <location>
        <begin position="1"/>
        <end position="43"/>
    </location>
</feature>
<feature type="chain" id="PRO_0000450245" description="Protein GAMETE CELL DEFECTIVE 1, mitochondrial">
    <location>
        <begin position="44"/>
        <end position="345"/>
    </location>
</feature>
<feature type="region of interest" description="Disordered" evidence="3">
    <location>
        <begin position="36"/>
        <end position="81"/>
    </location>
</feature>
<name>GCD1_ORYSJ</name>